<reference key="1">
    <citation type="journal article" date="1986" name="Nature">
        <title>Chloroplast gene organization deduced from complete sequence of liverwort Marchantia polymorpha chloroplast DNA.</title>
        <authorList>
            <person name="Ohyama K."/>
            <person name="Fukuzawa H."/>
            <person name="Kohchi T."/>
            <person name="Shirai H."/>
            <person name="Sano T."/>
            <person name="Sano S."/>
            <person name="Umesono K."/>
            <person name="Shiki Y."/>
            <person name="Takeuchi M."/>
            <person name="Chang Z."/>
            <person name="Aota S."/>
            <person name="Inokuchi H."/>
            <person name="Ozeki H."/>
        </authorList>
    </citation>
    <scope>NUCLEOTIDE SEQUENCE [LARGE SCALE GENOMIC DNA]</scope>
</reference>
<reference key="2">
    <citation type="journal article" date="1988" name="J. Mol. Biol.">
        <title>Structure and organization of Marchantia polymorpha chloroplast genome. II. Gene organization of the large single copy region from rps'12 to atpB.</title>
        <authorList>
            <person name="Umesono K."/>
            <person name="Inokuchi H."/>
            <person name="Shiki Y."/>
            <person name="Takeuchi M."/>
            <person name="Chang Z."/>
            <person name="Fukuzawa H."/>
            <person name="Kohchi T."/>
            <person name="Shirai H."/>
            <person name="Ohyama K."/>
            <person name="Ozeki H."/>
        </authorList>
    </citation>
    <scope>NUCLEOTIDE SEQUENCE [GENOMIC DNA]</scope>
</reference>
<protein>
    <recommendedName>
        <fullName evidence="2">Small ribosomal subunit protein uS4c</fullName>
    </recommendedName>
    <alternativeName>
        <fullName>30S ribosomal protein S4, chloroplastic</fullName>
    </alternativeName>
</protein>
<proteinExistence type="inferred from homology"/>
<feature type="chain" id="PRO_0000132625" description="Small ribosomal subunit protein uS4c">
    <location>
        <begin position="1"/>
        <end position="202"/>
    </location>
</feature>
<feature type="domain" description="S4 RNA-binding">
    <location>
        <begin position="90"/>
        <end position="154"/>
    </location>
</feature>
<dbReference type="EMBL" id="X04465">
    <property type="protein sequence ID" value="CAA28086.1"/>
    <property type="molecule type" value="Genomic_DNA"/>
</dbReference>
<dbReference type="PIR" id="A02704">
    <property type="entry name" value="R3LV4"/>
</dbReference>
<dbReference type="RefSeq" id="NP_039300.1">
    <property type="nucleotide sequence ID" value="NC_001319.1"/>
</dbReference>
<dbReference type="SMR" id="P06358"/>
<dbReference type="GeneID" id="2702549"/>
<dbReference type="GO" id="GO:0009507">
    <property type="term" value="C:chloroplast"/>
    <property type="evidence" value="ECO:0007669"/>
    <property type="project" value="UniProtKB-SubCell"/>
</dbReference>
<dbReference type="GO" id="GO:0015935">
    <property type="term" value="C:small ribosomal subunit"/>
    <property type="evidence" value="ECO:0007669"/>
    <property type="project" value="InterPro"/>
</dbReference>
<dbReference type="GO" id="GO:0019843">
    <property type="term" value="F:rRNA binding"/>
    <property type="evidence" value="ECO:0007669"/>
    <property type="project" value="UniProtKB-UniRule"/>
</dbReference>
<dbReference type="GO" id="GO:0003735">
    <property type="term" value="F:structural constituent of ribosome"/>
    <property type="evidence" value="ECO:0007669"/>
    <property type="project" value="InterPro"/>
</dbReference>
<dbReference type="GO" id="GO:0006412">
    <property type="term" value="P:translation"/>
    <property type="evidence" value="ECO:0007669"/>
    <property type="project" value="UniProtKB-UniRule"/>
</dbReference>
<dbReference type="CDD" id="cd00165">
    <property type="entry name" value="S4"/>
    <property type="match status" value="1"/>
</dbReference>
<dbReference type="FunFam" id="1.10.1050.10:FF:000002">
    <property type="entry name" value="30S ribosomal protein S4, chloroplastic"/>
    <property type="match status" value="1"/>
</dbReference>
<dbReference type="FunFam" id="3.10.290.10:FF:000081">
    <property type="entry name" value="30S ribosomal protein S4, chloroplastic"/>
    <property type="match status" value="1"/>
</dbReference>
<dbReference type="Gene3D" id="1.10.1050.10">
    <property type="entry name" value="Ribosomal Protein S4 Delta 41, Chain A, domain 1"/>
    <property type="match status" value="1"/>
</dbReference>
<dbReference type="Gene3D" id="3.10.290.10">
    <property type="entry name" value="RNA-binding S4 domain"/>
    <property type="match status" value="1"/>
</dbReference>
<dbReference type="HAMAP" id="MF_01306_B">
    <property type="entry name" value="Ribosomal_uS4_B"/>
    <property type="match status" value="1"/>
</dbReference>
<dbReference type="InterPro" id="IPR022801">
    <property type="entry name" value="Ribosomal_uS4"/>
</dbReference>
<dbReference type="InterPro" id="IPR005709">
    <property type="entry name" value="Ribosomal_uS4_bac-type"/>
</dbReference>
<dbReference type="InterPro" id="IPR018079">
    <property type="entry name" value="Ribosomal_uS4_CS"/>
</dbReference>
<dbReference type="InterPro" id="IPR001912">
    <property type="entry name" value="Ribosomal_uS4_N"/>
</dbReference>
<dbReference type="InterPro" id="IPR002942">
    <property type="entry name" value="S4_RNA-bd"/>
</dbReference>
<dbReference type="InterPro" id="IPR036986">
    <property type="entry name" value="S4_RNA-bd_sf"/>
</dbReference>
<dbReference type="NCBIfam" id="NF003717">
    <property type="entry name" value="PRK05327.1"/>
    <property type="match status" value="1"/>
</dbReference>
<dbReference type="NCBIfam" id="TIGR01017">
    <property type="entry name" value="rpsD_bact"/>
    <property type="match status" value="1"/>
</dbReference>
<dbReference type="PANTHER" id="PTHR11831">
    <property type="entry name" value="30S 40S RIBOSOMAL PROTEIN"/>
    <property type="match status" value="1"/>
</dbReference>
<dbReference type="PANTHER" id="PTHR11831:SF4">
    <property type="entry name" value="SMALL RIBOSOMAL SUBUNIT PROTEIN US4M"/>
    <property type="match status" value="1"/>
</dbReference>
<dbReference type="Pfam" id="PF00163">
    <property type="entry name" value="Ribosomal_S4"/>
    <property type="match status" value="1"/>
</dbReference>
<dbReference type="Pfam" id="PF01479">
    <property type="entry name" value="S4"/>
    <property type="match status" value="1"/>
</dbReference>
<dbReference type="SMART" id="SM01390">
    <property type="entry name" value="Ribosomal_S4"/>
    <property type="match status" value="1"/>
</dbReference>
<dbReference type="SMART" id="SM00363">
    <property type="entry name" value="S4"/>
    <property type="match status" value="1"/>
</dbReference>
<dbReference type="SUPFAM" id="SSF55174">
    <property type="entry name" value="Alpha-L RNA-binding motif"/>
    <property type="match status" value="1"/>
</dbReference>
<dbReference type="PROSITE" id="PS00632">
    <property type="entry name" value="RIBOSOMAL_S4"/>
    <property type="match status" value="1"/>
</dbReference>
<dbReference type="PROSITE" id="PS50889">
    <property type="entry name" value="S4"/>
    <property type="match status" value="1"/>
</dbReference>
<evidence type="ECO:0000250" key="1"/>
<evidence type="ECO:0000305" key="2"/>
<accession>P06358</accession>
<sequence>MSRYRGPRVKIIRRLGALPGLTNKTLKLKSGYINQSTSNKKVSQYRIRLEEKQKLRFHYGLTERQLLKYVRIARKAKGSTGQVLLQLLEMRLDNIIFRLGMAPTIPGARQLVNHRHILINNNTVDIPSYNCKPKDVITIKDRSKSQSIIIKNLNSFQKQKIPNHLTFDLMQIKGLVNQIIDREWIYLKINELLVVEYYSRQV</sequence>
<geneLocation type="chloroplast"/>
<comment type="function">
    <text evidence="1">One of the primary rRNA binding proteins, it binds directly to 16S rRNA where it nucleates assembly of the body of the 30S subunit.</text>
</comment>
<comment type="function">
    <text evidence="1">With S5 and S12 plays an important role in translational accuracy.</text>
</comment>
<comment type="subunit">
    <text evidence="1">Part of the 30S ribosomal subunit. Contacts protein S5. The interaction surface between S4 and S5 is involved in control of translational fidelity (By similarity).</text>
</comment>
<comment type="subcellular location">
    <subcellularLocation>
        <location>Plastid</location>
        <location>Chloroplast</location>
    </subcellularLocation>
</comment>
<comment type="similarity">
    <text evidence="2">Belongs to the universal ribosomal protein uS4 family.</text>
</comment>
<keyword id="KW-0150">Chloroplast</keyword>
<keyword id="KW-0934">Plastid</keyword>
<keyword id="KW-0687">Ribonucleoprotein</keyword>
<keyword id="KW-0689">Ribosomal protein</keyword>
<keyword id="KW-0694">RNA-binding</keyword>
<keyword id="KW-0699">rRNA-binding</keyword>
<gene>
    <name type="primary">rps4</name>
</gene>
<name>RR4_MARPO</name>
<organism>
    <name type="scientific">Marchantia polymorpha</name>
    <name type="common">Common liverwort</name>
    <name type="synonym">Marchantia aquatica</name>
    <dbReference type="NCBI Taxonomy" id="3197"/>
    <lineage>
        <taxon>Eukaryota</taxon>
        <taxon>Viridiplantae</taxon>
        <taxon>Streptophyta</taxon>
        <taxon>Embryophyta</taxon>
        <taxon>Marchantiophyta</taxon>
        <taxon>Marchantiopsida</taxon>
        <taxon>Marchantiidae</taxon>
        <taxon>Marchantiales</taxon>
        <taxon>Marchantiaceae</taxon>
        <taxon>Marchantia</taxon>
    </lineage>
</organism>